<sequence>MASKASGGSTRNGRDSISKRLGVKRYDGQVVRAGNILVRQRGTKIYPGKNVGMGKDYTLFALIDGKVKFETSKGKKVVSVYPVET</sequence>
<evidence type="ECO:0000255" key="1">
    <source>
        <dbReference type="HAMAP-Rule" id="MF_00539"/>
    </source>
</evidence>
<evidence type="ECO:0000256" key="2">
    <source>
        <dbReference type="SAM" id="MobiDB-lite"/>
    </source>
</evidence>
<evidence type="ECO:0000305" key="3"/>
<organism>
    <name type="scientific">Sulfurihydrogenibium sp. (strain YO3AOP1)</name>
    <dbReference type="NCBI Taxonomy" id="436114"/>
    <lineage>
        <taxon>Bacteria</taxon>
        <taxon>Pseudomonadati</taxon>
        <taxon>Aquificota</taxon>
        <taxon>Aquificia</taxon>
        <taxon>Aquificales</taxon>
        <taxon>Hydrogenothermaceae</taxon>
        <taxon>Sulfurihydrogenibium</taxon>
    </lineage>
</organism>
<name>RL27_SULSY</name>
<gene>
    <name evidence="1" type="primary">rpmA</name>
    <name type="ordered locus">SYO3AOP1_0764</name>
</gene>
<accession>B2V8X4</accession>
<proteinExistence type="inferred from homology"/>
<feature type="chain" id="PRO_1000128817" description="Large ribosomal subunit protein bL27">
    <location>
        <begin position="1"/>
        <end position="85"/>
    </location>
</feature>
<feature type="region of interest" description="Disordered" evidence="2">
    <location>
        <begin position="1"/>
        <end position="20"/>
    </location>
</feature>
<feature type="compositionally biased region" description="Polar residues" evidence="2">
    <location>
        <begin position="1"/>
        <end position="11"/>
    </location>
</feature>
<dbReference type="EMBL" id="CP001080">
    <property type="protein sequence ID" value="ACD66397.1"/>
    <property type="molecule type" value="Genomic_DNA"/>
</dbReference>
<dbReference type="RefSeq" id="WP_012459474.1">
    <property type="nucleotide sequence ID" value="NC_010730.1"/>
</dbReference>
<dbReference type="SMR" id="B2V8X4"/>
<dbReference type="STRING" id="436114.SYO3AOP1_0764"/>
<dbReference type="KEGG" id="sul:SYO3AOP1_0764"/>
<dbReference type="eggNOG" id="COG0211">
    <property type="taxonomic scope" value="Bacteria"/>
</dbReference>
<dbReference type="HOGENOM" id="CLU_095424_4_1_0"/>
<dbReference type="GO" id="GO:0022625">
    <property type="term" value="C:cytosolic large ribosomal subunit"/>
    <property type="evidence" value="ECO:0007669"/>
    <property type="project" value="TreeGrafter"/>
</dbReference>
<dbReference type="GO" id="GO:0003735">
    <property type="term" value="F:structural constituent of ribosome"/>
    <property type="evidence" value="ECO:0007669"/>
    <property type="project" value="InterPro"/>
</dbReference>
<dbReference type="GO" id="GO:0006412">
    <property type="term" value="P:translation"/>
    <property type="evidence" value="ECO:0007669"/>
    <property type="project" value="UniProtKB-UniRule"/>
</dbReference>
<dbReference type="FunFam" id="2.40.50.100:FF:000004">
    <property type="entry name" value="50S ribosomal protein L27"/>
    <property type="match status" value="1"/>
</dbReference>
<dbReference type="Gene3D" id="2.40.50.100">
    <property type="match status" value="1"/>
</dbReference>
<dbReference type="HAMAP" id="MF_00539">
    <property type="entry name" value="Ribosomal_bL27"/>
    <property type="match status" value="1"/>
</dbReference>
<dbReference type="InterPro" id="IPR001684">
    <property type="entry name" value="Ribosomal_bL27"/>
</dbReference>
<dbReference type="InterPro" id="IPR018261">
    <property type="entry name" value="Ribosomal_bL27_CS"/>
</dbReference>
<dbReference type="NCBIfam" id="TIGR00062">
    <property type="entry name" value="L27"/>
    <property type="match status" value="1"/>
</dbReference>
<dbReference type="PANTHER" id="PTHR15893:SF0">
    <property type="entry name" value="LARGE RIBOSOMAL SUBUNIT PROTEIN BL27M"/>
    <property type="match status" value="1"/>
</dbReference>
<dbReference type="PANTHER" id="PTHR15893">
    <property type="entry name" value="RIBOSOMAL PROTEIN L27"/>
    <property type="match status" value="1"/>
</dbReference>
<dbReference type="Pfam" id="PF01016">
    <property type="entry name" value="Ribosomal_L27"/>
    <property type="match status" value="1"/>
</dbReference>
<dbReference type="PRINTS" id="PR00063">
    <property type="entry name" value="RIBOSOMALL27"/>
</dbReference>
<dbReference type="SUPFAM" id="SSF110324">
    <property type="entry name" value="Ribosomal L27 protein-like"/>
    <property type="match status" value="1"/>
</dbReference>
<dbReference type="PROSITE" id="PS00831">
    <property type="entry name" value="RIBOSOMAL_L27"/>
    <property type="match status" value="1"/>
</dbReference>
<keyword id="KW-0687">Ribonucleoprotein</keyword>
<keyword id="KW-0689">Ribosomal protein</keyword>
<comment type="similarity">
    <text evidence="1">Belongs to the bacterial ribosomal protein bL27 family.</text>
</comment>
<reference key="1">
    <citation type="journal article" date="2009" name="J. Bacteriol.">
        <title>Complete and draft genome sequences of six members of the Aquificales.</title>
        <authorList>
            <person name="Reysenbach A.-L."/>
            <person name="Hamamura N."/>
            <person name="Podar M."/>
            <person name="Griffiths E."/>
            <person name="Ferreira S."/>
            <person name="Hochstein R."/>
            <person name="Heidelberg J."/>
            <person name="Johnson J."/>
            <person name="Mead D."/>
            <person name="Pohorille A."/>
            <person name="Sarmiento M."/>
            <person name="Schweighofer K."/>
            <person name="Seshadri R."/>
            <person name="Voytek M.A."/>
        </authorList>
    </citation>
    <scope>NUCLEOTIDE SEQUENCE [LARGE SCALE GENOMIC DNA]</scope>
    <source>
        <strain>YO3AOP1</strain>
    </source>
</reference>
<protein>
    <recommendedName>
        <fullName evidence="1">Large ribosomal subunit protein bL27</fullName>
    </recommendedName>
    <alternativeName>
        <fullName evidence="3">50S ribosomal protein L27</fullName>
    </alternativeName>
</protein>